<comment type="function">
    <text evidence="1">Involved in mRNA degradation. Catalyzes the phosphorolysis of single-stranded polyribonucleotides processively in the 3'- to 5'-direction.</text>
</comment>
<comment type="catalytic activity">
    <reaction evidence="1">
        <text>RNA(n+1) + phosphate = RNA(n) + a ribonucleoside 5'-diphosphate</text>
        <dbReference type="Rhea" id="RHEA:22096"/>
        <dbReference type="Rhea" id="RHEA-COMP:14527"/>
        <dbReference type="Rhea" id="RHEA-COMP:17342"/>
        <dbReference type="ChEBI" id="CHEBI:43474"/>
        <dbReference type="ChEBI" id="CHEBI:57930"/>
        <dbReference type="ChEBI" id="CHEBI:140395"/>
        <dbReference type="EC" id="2.7.7.8"/>
    </reaction>
</comment>
<comment type="cofactor">
    <cofactor evidence="1">
        <name>Mg(2+)</name>
        <dbReference type="ChEBI" id="CHEBI:18420"/>
    </cofactor>
</comment>
<comment type="subunit">
    <text evidence="1">Component of the RNA degradosome, which is a multiprotein complex involved in RNA processing and mRNA degradation.</text>
</comment>
<comment type="subcellular location">
    <subcellularLocation>
        <location evidence="1">Cytoplasm</location>
    </subcellularLocation>
</comment>
<comment type="similarity">
    <text evidence="1">Belongs to the polyribonucleotide nucleotidyltransferase family.</text>
</comment>
<keyword id="KW-0963">Cytoplasm</keyword>
<keyword id="KW-0460">Magnesium</keyword>
<keyword id="KW-0479">Metal-binding</keyword>
<keyword id="KW-0548">Nucleotidyltransferase</keyword>
<keyword id="KW-1185">Reference proteome</keyword>
<keyword id="KW-0694">RNA-binding</keyword>
<keyword id="KW-0808">Transferase</keyword>
<dbReference type="EC" id="2.7.7.8" evidence="1"/>
<dbReference type="EMBL" id="CP000544">
    <property type="protein sequence ID" value="ABM62509.1"/>
    <property type="molecule type" value="Genomic_DNA"/>
</dbReference>
<dbReference type="SMR" id="A1WXU7"/>
<dbReference type="STRING" id="349124.Hhal_1745"/>
<dbReference type="KEGG" id="hha:Hhal_1745"/>
<dbReference type="eggNOG" id="COG1185">
    <property type="taxonomic scope" value="Bacteria"/>
</dbReference>
<dbReference type="HOGENOM" id="CLU_004217_2_2_6"/>
<dbReference type="OrthoDB" id="9804305at2"/>
<dbReference type="Proteomes" id="UP000000647">
    <property type="component" value="Chromosome"/>
</dbReference>
<dbReference type="GO" id="GO:0005829">
    <property type="term" value="C:cytosol"/>
    <property type="evidence" value="ECO:0007669"/>
    <property type="project" value="TreeGrafter"/>
</dbReference>
<dbReference type="GO" id="GO:0000175">
    <property type="term" value="F:3'-5'-RNA exonuclease activity"/>
    <property type="evidence" value="ECO:0007669"/>
    <property type="project" value="TreeGrafter"/>
</dbReference>
<dbReference type="GO" id="GO:0000287">
    <property type="term" value="F:magnesium ion binding"/>
    <property type="evidence" value="ECO:0007669"/>
    <property type="project" value="UniProtKB-UniRule"/>
</dbReference>
<dbReference type="GO" id="GO:0004654">
    <property type="term" value="F:polyribonucleotide nucleotidyltransferase activity"/>
    <property type="evidence" value="ECO:0007669"/>
    <property type="project" value="UniProtKB-UniRule"/>
</dbReference>
<dbReference type="GO" id="GO:0003723">
    <property type="term" value="F:RNA binding"/>
    <property type="evidence" value="ECO:0007669"/>
    <property type="project" value="UniProtKB-UniRule"/>
</dbReference>
<dbReference type="GO" id="GO:0006402">
    <property type="term" value="P:mRNA catabolic process"/>
    <property type="evidence" value="ECO:0007669"/>
    <property type="project" value="UniProtKB-UniRule"/>
</dbReference>
<dbReference type="GO" id="GO:0006396">
    <property type="term" value="P:RNA processing"/>
    <property type="evidence" value="ECO:0007669"/>
    <property type="project" value="InterPro"/>
</dbReference>
<dbReference type="CDD" id="cd02393">
    <property type="entry name" value="KH-I_PNPase"/>
    <property type="match status" value="1"/>
</dbReference>
<dbReference type="CDD" id="cd11363">
    <property type="entry name" value="RNase_PH_PNPase_1"/>
    <property type="match status" value="1"/>
</dbReference>
<dbReference type="CDD" id="cd11364">
    <property type="entry name" value="RNase_PH_PNPase_2"/>
    <property type="match status" value="1"/>
</dbReference>
<dbReference type="CDD" id="cd04472">
    <property type="entry name" value="S1_PNPase"/>
    <property type="match status" value="1"/>
</dbReference>
<dbReference type="FunFam" id="2.40.50.140:FF:000023">
    <property type="entry name" value="Polyribonucleotide nucleotidyltransferase"/>
    <property type="match status" value="1"/>
</dbReference>
<dbReference type="FunFam" id="3.30.1370.10:FF:000001">
    <property type="entry name" value="Polyribonucleotide nucleotidyltransferase"/>
    <property type="match status" value="1"/>
</dbReference>
<dbReference type="FunFam" id="3.30.230.70:FF:000001">
    <property type="entry name" value="Polyribonucleotide nucleotidyltransferase"/>
    <property type="match status" value="1"/>
</dbReference>
<dbReference type="FunFam" id="3.30.230.70:FF:000002">
    <property type="entry name" value="Polyribonucleotide nucleotidyltransferase"/>
    <property type="match status" value="1"/>
</dbReference>
<dbReference type="Gene3D" id="3.30.230.70">
    <property type="entry name" value="GHMP Kinase, N-terminal domain"/>
    <property type="match status" value="2"/>
</dbReference>
<dbReference type="Gene3D" id="3.30.1370.10">
    <property type="entry name" value="K Homology domain, type 1"/>
    <property type="match status" value="1"/>
</dbReference>
<dbReference type="Gene3D" id="2.40.50.140">
    <property type="entry name" value="Nucleic acid-binding proteins"/>
    <property type="match status" value="1"/>
</dbReference>
<dbReference type="HAMAP" id="MF_01595">
    <property type="entry name" value="PNPase"/>
    <property type="match status" value="1"/>
</dbReference>
<dbReference type="InterPro" id="IPR001247">
    <property type="entry name" value="ExoRNase_PH_dom1"/>
</dbReference>
<dbReference type="InterPro" id="IPR015847">
    <property type="entry name" value="ExoRNase_PH_dom2"/>
</dbReference>
<dbReference type="InterPro" id="IPR036345">
    <property type="entry name" value="ExoRNase_PH_dom2_sf"/>
</dbReference>
<dbReference type="InterPro" id="IPR004087">
    <property type="entry name" value="KH_dom"/>
</dbReference>
<dbReference type="InterPro" id="IPR004088">
    <property type="entry name" value="KH_dom_type_1"/>
</dbReference>
<dbReference type="InterPro" id="IPR036612">
    <property type="entry name" value="KH_dom_type_1_sf"/>
</dbReference>
<dbReference type="InterPro" id="IPR012340">
    <property type="entry name" value="NA-bd_OB-fold"/>
</dbReference>
<dbReference type="InterPro" id="IPR012162">
    <property type="entry name" value="PNPase"/>
</dbReference>
<dbReference type="InterPro" id="IPR027408">
    <property type="entry name" value="PNPase/RNase_PH_dom_sf"/>
</dbReference>
<dbReference type="InterPro" id="IPR015848">
    <property type="entry name" value="PNPase_PH_RNA-bd_bac/org-type"/>
</dbReference>
<dbReference type="InterPro" id="IPR036456">
    <property type="entry name" value="PNPase_PH_RNA-bd_sf"/>
</dbReference>
<dbReference type="InterPro" id="IPR020568">
    <property type="entry name" value="Ribosomal_Su5_D2-typ_SF"/>
</dbReference>
<dbReference type="InterPro" id="IPR003029">
    <property type="entry name" value="S1_domain"/>
</dbReference>
<dbReference type="NCBIfam" id="TIGR03591">
    <property type="entry name" value="polynuc_phos"/>
    <property type="match status" value="1"/>
</dbReference>
<dbReference type="NCBIfam" id="NF008805">
    <property type="entry name" value="PRK11824.1"/>
    <property type="match status" value="1"/>
</dbReference>
<dbReference type="PANTHER" id="PTHR11252">
    <property type="entry name" value="POLYRIBONUCLEOTIDE NUCLEOTIDYLTRANSFERASE"/>
    <property type="match status" value="1"/>
</dbReference>
<dbReference type="PANTHER" id="PTHR11252:SF0">
    <property type="entry name" value="POLYRIBONUCLEOTIDE NUCLEOTIDYLTRANSFERASE 1, MITOCHONDRIAL"/>
    <property type="match status" value="1"/>
</dbReference>
<dbReference type="Pfam" id="PF00013">
    <property type="entry name" value="KH_1"/>
    <property type="match status" value="1"/>
</dbReference>
<dbReference type="Pfam" id="PF03726">
    <property type="entry name" value="PNPase"/>
    <property type="match status" value="1"/>
</dbReference>
<dbReference type="Pfam" id="PF01138">
    <property type="entry name" value="RNase_PH"/>
    <property type="match status" value="2"/>
</dbReference>
<dbReference type="Pfam" id="PF03725">
    <property type="entry name" value="RNase_PH_C"/>
    <property type="match status" value="2"/>
</dbReference>
<dbReference type="Pfam" id="PF00575">
    <property type="entry name" value="S1"/>
    <property type="match status" value="1"/>
</dbReference>
<dbReference type="PIRSF" id="PIRSF005499">
    <property type="entry name" value="PNPase"/>
    <property type="match status" value="1"/>
</dbReference>
<dbReference type="SMART" id="SM00322">
    <property type="entry name" value="KH"/>
    <property type="match status" value="1"/>
</dbReference>
<dbReference type="SMART" id="SM00316">
    <property type="entry name" value="S1"/>
    <property type="match status" value="1"/>
</dbReference>
<dbReference type="SUPFAM" id="SSF54791">
    <property type="entry name" value="Eukaryotic type KH-domain (KH-domain type I)"/>
    <property type="match status" value="1"/>
</dbReference>
<dbReference type="SUPFAM" id="SSF50249">
    <property type="entry name" value="Nucleic acid-binding proteins"/>
    <property type="match status" value="1"/>
</dbReference>
<dbReference type="SUPFAM" id="SSF46915">
    <property type="entry name" value="Polynucleotide phosphorylase/guanosine pentaphosphate synthase (PNPase/GPSI), domain 3"/>
    <property type="match status" value="1"/>
</dbReference>
<dbReference type="SUPFAM" id="SSF55666">
    <property type="entry name" value="Ribonuclease PH domain 2-like"/>
    <property type="match status" value="2"/>
</dbReference>
<dbReference type="SUPFAM" id="SSF54211">
    <property type="entry name" value="Ribosomal protein S5 domain 2-like"/>
    <property type="match status" value="2"/>
</dbReference>
<dbReference type="PROSITE" id="PS50084">
    <property type="entry name" value="KH_TYPE_1"/>
    <property type="match status" value="1"/>
</dbReference>
<dbReference type="PROSITE" id="PS50126">
    <property type="entry name" value="S1"/>
    <property type="match status" value="1"/>
</dbReference>
<feature type="chain" id="PRO_0000329675" description="Polyribonucleotide nucleotidyltransferase">
    <location>
        <begin position="1"/>
        <end position="702"/>
    </location>
</feature>
<feature type="domain" description="KH" evidence="1">
    <location>
        <begin position="560"/>
        <end position="619"/>
    </location>
</feature>
<feature type="domain" description="S1 motif" evidence="1">
    <location>
        <begin position="629"/>
        <end position="697"/>
    </location>
</feature>
<feature type="binding site" evidence="1">
    <location>
        <position position="493"/>
    </location>
    <ligand>
        <name>Mg(2+)</name>
        <dbReference type="ChEBI" id="CHEBI:18420"/>
    </ligand>
</feature>
<feature type="binding site" evidence="1">
    <location>
        <position position="499"/>
    </location>
    <ligand>
        <name>Mg(2+)</name>
        <dbReference type="ChEBI" id="CHEBI:18420"/>
    </ligand>
</feature>
<accession>A1WXU7</accession>
<protein>
    <recommendedName>
        <fullName evidence="1">Polyribonucleotide nucleotidyltransferase</fullName>
        <ecNumber evidence="1">2.7.7.8</ecNumber>
    </recommendedName>
    <alternativeName>
        <fullName evidence="1">Polynucleotide phosphorylase</fullName>
        <shortName evidence="1">PNPase</shortName>
    </alternativeName>
</protein>
<organism>
    <name type="scientific">Halorhodospira halophila (strain DSM 244 / SL1)</name>
    <name type="common">Ectothiorhodospira halophila (strain DSM 244 / SL1)</name>
    <dbReference type="NCBI Taxonomy" id="349124"/>
    <lineage>
        <taxon>Bacteria</taxon>
        <taxon>Pseudomonadati</taxon>
        <taxon>Pseudomonadota</taxon>
        <taxon>Gammaproteobacteria</taxon>
        <taxon>Chromatiales</taxon>
        <taxon>Ectothiorhodospiraceae</taxon>
        <taxon>Halorhodospira</taxon>
    </lineage>
</organism>
<sequence length="702" mass="76173">MSESQLSLTPVKRSFQFGQHQVTLETGGVARQADGAVLVDMADTVVLVTVVGRKDPAAARDFLPLTVNYQERTYAAGRIPGGFFKREGRPSEKETLTCRLIDRPIRPLFPEGFRQEVQVIATVLSLNDEVDADIPAMIGTSAALALSGIPFEGPIGACRVGHLDGEFVLNPTFSQTAESDLDLVVAGTQDAVLMVESEANLLPESTMLDAVLYGHEQMQVAIDTINDLAAEAGKPRWDWQPPAKNESLDSAVAELVRSDLEAAYQIADKQERSERVGALRDKAVEALADEEREGWGAGDVGEAFKTLEKKIVRGRILAGHPRIDGRDNQTVRPLNVQAGVLPRTHGSAIFTRGETQAIVVSTLGTGRDAQVIDALEGERREPFMLHYNFPPYCVGETGFIGTPKRREIGHGKLAKRGVEAVMPSDEEFPYVIRVVSEVTESNGSSSMATVCGTSLSLMDAGVPLKAQVAGIAMGLIKEGDEFAVLTDILGDEDHLGDMDFKVAGSKDGVTALQMDIKIDGITREIMEQALDQARSGRLHILEQMNQVIDKPREQMSEYAPRLLTMRIDPERIRDVIGKGGATIRGLTEETGTNIDISDEGVVTIASADKAAAEEAKKRIELLTADVEVGKVYDGKVAKLMDFGAFVNILPGRDGLVHISQISNNRVENVADELSEGDSVRVKVLEVDRQGRIRLSMKAVEEE</sequence>
<proteinExistence type="inferred from homology"/>
<gene>
    <name evidence="1" type="primary">pnp</name>
    <name type="ordered locus">Hhal_1745</name>
</gene>
<name>PNP_HALHL</name>
<evidence type="ECO:0000255" key="1">
    <source>
        <dbReference type="HAMAP-Rule" id="MF_01595"/>
    </source>
</evidence>
<reference key="1">
    <citation type="submission" date="2006-12" db="EMBL/GenBank/DDBJ databases">
        <title>Complete sequence of Halorhodospira halophila SL1.</title>
        <authorList>
            <consortium name="US DOE Joint Genome Institute"/>
            <person name="Copeland A."/>
            <person name="Lucas S."/>
            <person name="Lapidus A."/>
            <person name="Barry K."/>
            <person name="Detter J.C."/>
            <person name="Glavina del Rio T."/>
            <person name="Hammon N."/>
            <person name="Israni S."/>
            <person name="Dalin E."/>
            <person name="Tice H."/>
            <person name="Pitluck S."/>
            <person name="Saunders E."/>
            <person name="Brettin T."/>
            <person name="Bruce D."/>
            <person name="Han C."/>
            <person name="Tapia R."/>
            <person name="Schmutz J."/>
            <person name="Larimer F."/>
            <person name="Land M."/>
            <person name="Hauser L."/>
            <person name="Kyrpides N."/>
            <person name="Mikhailova N."/>
            <person name="Hoff W."/>
            <person name="Richardson P."/>
        </authorList>
    </citation>
    <scope>NUCLEOTIDE SEQUENCE [LARGE SCALE GENOMIC DNA]</scope>
    <source>
        <strain>DSM 244 / SL1</strain>
    </source>
</reference>